<organism>
    <name type="scientific">Danio rerio</name>
    <name type="common">Zebrafish</name>
    <name type="synonym">Brachydanio rerio</name>
    <dbReference type="NCBI Taxonomy" id="7955"/>
    <lineage>
        <taxon>Eukaryota</taxon>
        <taxon>Metazoa</taxon>
        <taxon>Chordata</taxon>
        <taxon>Craniata</taxon>
        <taxon>Vertebrata</taxon>
        <taxon>Euteleostomi</taxon>
        <taxon>Actinopterygii</taxon>
        <taxon>Neopterygii</taxon>
        <taxon>Teleostei</taxon>
        <taxon>Ostariophysi</taxon>
        <taxon>Cypriniformes</taxon>
        <taxon>Danionidae</taxon>
        <taxon>Danioninae</taxon>
        <taxon>Danio</taxon>
    </lineage>
</organism>
<sequence length="125" mass="13368">MGCVLLFLLLVCVPVVLPQGLRCLFCPVTSLNSSCAPVVTECPVQELCYTADGRFGRSSVLFRKGCMLRADCSRSRHQMIRGNNISFSFSCCGGHYCNSQPRAEPGGRLLLLLLPAAALTAAGAL</sequence>
<reference key="1">
    <citation type="journal article" date="2013" name="Nature">
        <title>The zebrafish reference genome sequence and its relationship to the human genome.</title>
        <authorList>
            <person name="Howe K."/>
            <person name="Clark M.D."/>
            <person name="Torroja C.F."/>
            <person name="Torrance J."/>
            <person name="Berthelot C."/>
            <person name="Muffato M."/>
            <person name="Collins J.E."/>
            <person name="Humphray S."/>
            <person name="McLaren K."/>
            <person name="Matthews L."/>
            <person name="McLaren S."/>
            <person name="Sealy I."/>
            <person name="Caccamo M."/>
            <person name="Churcher C."/>
            <person name="Scott C."/>
            <person name="Barrett J.C."/>
            <person name="Koch R."/>
            <person name="Rauch G.J."/>
            <person name="White S."/>
            <person name="Chow W."/>
            <person name="Kilian B."/>
            <person name="Quintais L.T."/>
            <person name="Guerra-Assuncao J.A."/>
            <person name="Zhou Y."/>
            <person name="Gu Y."/>
            <person name="Yen J."/>
            <person name="Vogel J.H."/>
            <person name="Eyre T."/>
            <person name="Redmond S."/>
            <person name="Banerjee R."/>
            <person name="Chi J."/>
            <person name="Fu B."/>
            <person name="Langley E."/>
            <person name="Maguire S.F."/>
            <person name="Laird G.K."/>
            <person name="Lloyd D."/>
            <person name="Kenyon E."/>
            <person name="Donaldson S."/>
            <person name="Sehra H."/>
            <person name="Almeida-King J."/>
            <person name="Loveland J."/>
            <person name="Trevanion S."/>
            <person name="Jones M."/>
            <person name="Quail M."/>
            <person name="Willey D."/>
            <person name="Hunt A."/>
            <person name="Burton J."/>
            <person name="Sims S."/>
            <person name="McLay K."/>
            <person name="Plumb B."/>
            <person name="Davis J."/>
            <person name="Clee C."/>
            <person name="Oliver K."/>
            <person name="Clark R."/>
            <person name="Riddle C."/>
            <person name="Elliot D."/>
            <person name="Threadgold G."/>
            <person name="Harden G."/>
            <person name="Ware D."/>
            <person name="Begum S."/>
            <person name="Mortimore B."/>
            <person name="Kerry G."/>
            <person name="Heath P."/>
            <person name="Phillimore B."/>
            <person name="Tracey A."/>
            <person name="Corby N."/>
            <person name="Dunn M."/>
            <person name="Johnson C."/>
            <person name="Wood J."/>
            <person name="Clark S."/>
            <person name="Pelan S."/>
            <person name="Griffiths G."/>
            <person name="Smith M."/>
            <person name="Glithero R."/>
            <person name="Howden P."/>
            <person name="Barker N."/>
            <person name="Lloyd C."/>
            <person name="Stevens C."/>
            <person name="Harley J."/>
            <person name="Holt K."/>
            <person name="Panagiotidis G."/>
            <person name="Lovell J."/>
            <person name="Beasley H."/>
            <person name="Henderson C."/>
            <person name="Gordon D."/>
            <person name="Auger K."/>
            <person name="Wright D."/>
            <person name="Collins J."/>
            <person name="Raisen C."/>
            <person name="Dyer L."/>
            <person name="Leung K."/>
            <person name="Robertson L."/>
            <person name="Ambridge K."/>
            <person name="Leongamornlert D."/>
            <person name="McGuire S."/>
            <person name="Gilderthorp R."/>
            <person name="Griffiths C."/>
            <person name="Manthravadi D."/>
            <person name="Nichol S."/>
            <person name="Barker G."/>
            <person name="Whitehead S."/>
            <person name="Kay M."/>
            <person name="Brown J."/>
            <person name="Murnane C."/>
            <person name="Gray E."/>
            <person name="Humphries M."/>
            <person name="Sycamore N."/>
            <person name="Barker D."/>
            <person name="Saunders D."/>
            <person name="Wallis J."/>
            <person name="Babbage A."/>
            <person name="Hammond S."/>
            <person name="Mashreghi-Mohammadi M."/>
            <person name="Barr L."/>
            <person name="Martin S."/>
            <person name="Wray P."/>
            <person name="Ellington A."/>
            <person name="Matthews N."/>
            <person name="Ellwood M."/>
            <person name="Woodmansey R."/>
            <person name="Clark G."/>
            <person name="Cooper J."/>
            <person name="Tromans A."/>
            <person name="Grafham D."/>
            <person name="Skuce C."/>
            <person name="Pandian R."/>
            <person name="Andrews R."/>
            <person name="Harrison E."/>
            <person name="Kimberley A."/>
            <person name="Garnett J."/>
            <person name="Fosker N."/>
            <person name="Hall R."/>
            <person name="Garner P."/>
            <person name="Kelly D."/>
            <person name="Bird C."/>
            <person name="Palmer S."/>
            <person name="Gehring I."/>
            <person name="Berger A."/>
            <person name="Dooley C.M."/>
            <person name="Ersan-Urun Z."/>
            <person name="Eser C."/>
            <person name="Geiger H."/>
            <person name="Geisler M."/>
            <person name="Karotki L."/>
            <person name="Kirn A."/>
            <person name="Konantz J."/>
            <person name="Konantz M."/>
            <person name="Oberlander M."/>
            <person name="Rudolph-Geiger S."/>
            <person name="Teucke M."/>
            <person name="Lanz C."/>
            <person name="Raddatz G."/>
            <person name="Osoegawa K."/>
            <person name="Zhu B."/>
            <person name="Rapp A."/>
            <person name="Widaa S."/>
            <person name="Langford C."/>
            <person name="Yang F."/>
            <person name="Schuster S.C."/>
            <person name="Carter N.P."/>
            <person name="Harrow J."/>
            <person name="Ning Z."/>
            <person name="Herrero J."/>
            <person name="Searle S.M."/>
            <person name="Enright A."/>
            <person name="Geisler R."/>
            <person name="Plasterk R.H."/>
            <person name="Lee C."/>
            <person name="Westerfield M."/>
            <person name="de Jong P.J."/>
            <person name="Zon L.I."/>
            <person name="Postlethwait J.H."/>
            <person name="Nusslein-Volhard C."/>
            <person name="Hubbard T.J."/>
            <person name="Roest Crollius H."/>
            <person name="Rogers J."/>
            <person name="Stemple D.L."/>
        </authorList>
    </citation>
    <scope>NUCLEOTIDE SEQUENCE [LARGE SCALE GENOMIC DNA]</scope>
    <source>
        <strain>Tuebingen</strain>
    </source>
</reference>
<reference key="2">
    <citation type="journal article" date="2018" name="Science">
        <title>The Ly6/uPAR protein Bouncer is necessary and sufficient for species-specific fertilization.</title>
        <authorList>
            <person name="Herberg S."/>
            <person name="Gert K.R."/>
            <person name="Schleiffer A."/>
            <person name="Pauli A."/>
        </authorList>
    </citation>
    <scope>FUNCTION</scope>
    <scope>SUBCELLULAR LOCATION</scope>
    <scope>GLYCOSYLATION</scope>
    <scope>TISSUE SPECIFICITY</scope>
    <scope>DISRUPTION PHENOTYPE</scope>
    <scope>MUTAGENESIS OF ASN-32 AND ASN-84</scope>
</reference>
<reference key="3">
    <citation type="journal article" date="2024" name="Cell">
        <title>A conserved fertilization complex bridges sperm and egg in vertebrates.</title>
        <authorList>
            <person name="Deneke V.E."/>
            <person name="Blaha A."/>
            <person name="Lu Y."/>
            <person name="Suwita J.P."/>
            <person name="Draper J.M."/>
            <person name="Phan C.S."/>
            <person name="Panser K."/>
            <person name="Schleiffer A."/>
            <person name="Jacob L."/>
            <person name="Humer T."/>
            <person name="Stejskal K."/>
            <person name="Krssakova G."/>
            <person name="Roitinger E."/>
            <person name="Handler D."/>
            <person name="Kamoshita M."/>
            <person name="Vance T.D.R."/>
            <person name="Wang X."/>
            <person name="Surm J.M."/>
            <person name="Moran Y."/>
            <person name="Lee J.E."/>
            <person name="Ikawa M."/>
            <person name="Pauli A."/>
        </authorList>
    </citation>
    <scope>INTERACTION WITH IZUMO1; SPACA6 AND TMEM81</scope>
</reference>
<gene>
    <name evidence="6" type="primary">bncr</name>
</gene>
<accession>P0DPQ9</accession>
<feature type="signal peptide" evidence="2">
    <location>
        <begin position="1"/>
        <end position="18"/>
    </location>
</feature>
<feature type="chain" id="PRO_0000445656" description="Protein Bouncer" evidence="2">
    <location>
        <begin position="19"/>
        <end position="98"/>
    </location>
</feature>
<feature type="propeptide" id="PRO_0000445657" description="Removed in mature form" evidence="2">
    <location>
        <begin position="99"/>
        <end position="125"/>
    </location>
</feature>
<feature type="domain" description="UPAR/Ly6" evidence="2">
    <location>
        <begin position="23"/>
        <end position="98"/>
    </location>
</feature>
<feature type="lipid moiety-binding region" description="GPI-anchor amidated asparagine" evidence="2">
    <location>
        <position position="98"/>
    </location>
</feature>
<feature type="glycosylation site" description="N-linked (GlcNAc...) asparagine" evidence="3">
    <location>
        <position position="32"/>
    </location>
</feature>
<feature type="glycosylation site" description="N-linked (GlcNAc...) asparagine" evidence="3">
    <location>
        <position position="84"/>
    </location>
</feature>
<feature type="disulfide bond" evidence="1">
    <location>
        <begin position="23"/>
        <end position="48"/>
    </location>
</feature>
<feature type="disulfide bond" evidence="1">
    <location>
        <begin position="26"/>
        <end position="35"/>
    </location>
</feature>
<feature type="disulfide bond" evidence="1">
    <location>
        <begin position="42"/>
        <end position="66"/>
    </location>
</feature>
<feature type="disulfide bond" evidence="1">
    <location>
        <begin position="72"/>
        <end position="91"/>
    </location>
</feature>
<feature type="disulfide bond" evidence="1">
    <location>
        <begin position="92"/>
        <end position="97"/>
    </location>
</feature>
<feature type="mutagenesis site" description="Glycosylation-defective mutant. Does not affect ability to promote fertilization and mediate sperm-egg binding; when associated with A-84." evidence="4">
    <original>N</original>
    <variation>A</variation>
    <location>
        <position position="32"/>
    </location>
</feature>
<feature type="mutagenesis site" description="Glycosylation-defective mutant. Does not affect ability to promote fertilization and mediate sperm-egg binding; when associated with A-32." evidence="4">
    <original>N</original>
    <variation>A</variation>
    <location>
        <position position="84"/>
    </location>
</feature>
<protein>
    <recommendedName>
        <fullName evidence="6">Protein Bouncer</fullName>
    </recommendedName>
</protein>
<proteinExistence type="evidence at protein level"/>
<comment type="function">
    <text evidence="4">Oocyte-expressed fertilization factor that mediates sperm-egg binding and is essential for sperm entry into the egg (PubMed:30190407). Necessary and sufficient to mediate species-specific gamete recognition and fertilization, which is essential for vertebrate species performing external fertilization (PubMed:30190407). External fertilization cannot guarantee that only conspecific sperm reaches the egg by precopulatory mate choice: proteins such as Bouncer can therefore support the selection of conspecific sperm (PubMed:30190407).</text>
</comment>
<comment type="subunit">
    <text evidence="5">Interacts with spermatocyte complex composed of izumo1, spaca6 and tmem81.</text>
</comment>
<comment type="subcellular location">
    <subcellularLocation>
        <location evidence="4">Cell membrane</location>
        <topology evidence="2">Lipid-anchor</topology>
        <topology evidence="2">GPI-anchor</topology>
    </subcellularLocation>
</comment>
<comment type="tissue specificity">
    <text evidence="4">Highly expressed in oocytes (PubMed:30190407). Not expressed in testis (PubMed:30190407).</text>
</comment>
<comment type="PTM">
    <text evidence="4">N-glycosylated.</text>
</comment>
<comment type="disruption phenotype">
    <text evidence="4">Females are almost sterile: only 7 of 3024 eggs derived from mutant females develop into cleavage-stage embryos, as opposed to the majority of eggs from wild-type (PubMed:30190407). Both male and female fishes develop normally and are overtly healthy (PubMed:30190407). Males are fertile (PubMed:30190407).</text>
</comment>
<comment type="miscellaneous">
    <text evidence="8">Was named bouncer (bncr) in reference to the colloquial name of a security guard at a bar.</text>
</comment>
<comment type="similarity">
    <text evidence="7">Belongs to the SPACA4/bouncer family.</text>
</comment>
<comment type="online information" name="Protein Spotlight">
    <link uri="https://www.proteinspotlight.org/back_issues/210/"/>
    <text>Silent walls - Issue 210 of January 2019</text>
</comment>
<dbReference type="EMBL" id="CABZ01080228">
    <property type="status" value="NOT_ANNOTATED_CDS"/>
    <property type="molecule type" value="Genomic_DNA"/>
</dbReference>
<dbReference type="RefSeq" id="NP_001352655.1">
    <property type="nucleotide sequence ID" value="NM_001365726.1"/>
</dbReference>
<dbReference type="RefSeq" id="XP_005173770.1">
    <property type="nucleotide sequence ID" value="XM_005173713.1"/>
</dbReference>
<dbReference type="SMR" id="P0DPQ9"/>
<dbReference type="GlyCosmos" id="P0DPQ9">
    <property type="glycosylation" value="2 sites, No reported glycans"/>
</dbReference>
<dbReference type="GeneID" id="101885477"/>
<dbReference type="InParanoid" id="P0DPQ9"/>
<dbReference type="OrthoDB" id="8929012at2759"/>
<dbReference type="PRO" id="PR:P0DPQ9"/>
<dbReference type="Proteomes" id="UP000000437">
    <property type="component" value="Chromosome 18"/>
</dbReference>
<dbReference type="GO" id="GO:0016020">
    <property type="term" value="C:membrane"/>
    <property type="evidence" value="ECO:0000314"/>
    <property type="project" value="ZFIN"/>
</dbReference>
<dbReference type="GO" id="GO:0005886">
    <property type="term" value="C:plasma membrane"/>
    <property type="evidence" value="ECO:0000314"/>
    <property type="project" value="UniProtKB"/>
</dbReference>
<dbReference type="GO" id="GO:0098552">
    <property type="term" value="C:side of membrane"/>
    <property type="evidence" value="ECO:0007669"/>
    <property type="project" value="UniProtKB-KW"/>
</dbReference>
<dbReference type="GO" id="GO:0007342">
    <property type="term" value="P:fusion of sperm to egg plasma membrane involved in single fertilization"/>
    <property type="evidence" value="ECO:0000314"/>
    <property type="project" value="UniProtKB"/>
</dbReference>
<dbReference type="GO" id="GO:0007338">
    <property type="term" value="P:single fertilization"/>
    <property type="evidence" value="ECO:0000314"/>
    <property type="project" value="UniProtKB"/>
</dbReference>
<dbReference type="GO" id="GO:0035036">
    <property type="term" value="P:sperm-egg recognition"/>
    <property type="evidence" value="ECO:0000314"/>
    <property type="project" value="UniProtKB"/>
</dbReference>
<dbReference type="CDD" id="cd23597">
    <property type="entry name" value="TFP_LU_ECD_Bncr"/>
    <property type="match status" value="1"/>
</dbReference>
<dbReference type="FunFam" id="2.10.60.10:FF:000039">
    <property type="entry name" value="Sperm acrosome-associated 4-like"/>
    <property type="match status" value="1"/>
</dbReference>
<dbReference type="Gene3D" id="2.10.60.10">
    <property type="entry name" value="CD59"/>
    <property type="match status" value="1"/>
</dbReference>
<dbReference type="InterPro" id="IPR016054">
    <property type="entry name" value="LY6_UPA_recep-like"/>
</dbReference>
<dbReference type="InterPro" id="IPR045860">
    <property type="entry name" value="Snake_toxin-like_sf"/>
</dbReference>
<dbReference type="InterPro" id="IPR046354">
    <property type="entry name" value="SPACA4/Bouncer"/>
</dbReference>
<dbReference type="PANTHER" id="PTHR47613">
    <property type="entry name" value="SPERM ACROSOME MEMBRANE-ASSOCIATED PROTEIN 4"/>
    <property type="match status" value="1"/>
</dbReference>
<dbReference type="PANTHER" id="PTHR47613:SF1">
    <property type="entry name" value="SPERM ACROSOME MEMBRANE-ASSOCIATED PROTEIN 4"/>
    <property type="match status" value="1"/>
</dbReference>
<dbReference type="Pfam" id="PF00021">
    <property type="entry name" value="UPAR_LY6"/>
    <property type="match status" value="1"/>
</dbReference>
<dbReference type="SMART" id="SM00134">
    <property type="entry name" value="LU"/>
    <property type="match status" value="1"/>
</dbReference>
<dbReference type="SUPFAM" id="SSF57302">
    <property type="entry name" value="Snake toxin-like"/>
    <property type="match status" value="1"/>
</dbReference>
<keyword id="KW-1003">Cell membrane</keyword>
<keyword id="KW-1015">Disulfide bond</keyword>
<keyword id="KW-0278">Fertilization</keyword>
<keyword id="KW-0325">Glycoprotein</keyword>
<keyword id="KW-0336">GPI-anchor</keyword>
<keyword id="KW-0449">Lipoprotein</keyword>
<keyword id="KW-0472">Membrane</keyword>
<keyword id="KW-1185">Reference proteome</keyword>
<keyword id="KW-0732">Signal</keyword>
<evidence type="ECO:0000250" key="1">
    <source>
        <dbReference type="UniProtKB" id="P13987"/>
    </source>
</evidence>
<evidence type="ECO:0000255" key="2"/>
<evidence type="ECO:0000255" key="3">
    <source>
        <dbReference type="PROSITE-ProRule" id="PRU00498"/>
    </source>
</evidence>
<evidence type="ECO:0000269" key="4">
    <source>
    </source>
</evidence>
<evidence type="ECO:0000269" key="5">
    <source>
    </source>
</evidence>
<evidence type="ECO:0000303" key="6">
    <source>
    </source>
</evidence>
<evidence type="ECO:0000305" key="7"/>
<evidence type="ECO:0000305" key="8">
    <source>
    </source>
</evidence>
<name>BNCR_DANRE</name>